<reference key="1">
    <citation type="submission" date="2007-10" db="EMBL/GenBank/DDBJ databases">
        <title>Complete genome of Alkaliphilus oremlandii OhILAs.</title>
        <authorList>
            <person name="Copeland A."/>
            <person name="Lucas S."/>
            <person name="Lapidus A."/>
            <person name="Barry K."/>
            <person name="Detter J.C."/>
            <person name="Glavina del Rio T."/>
            <person name="Hammon N."/>
            <person name="Israni S."/>
            <person name="Dalin E."/>
            <person name="Tice H."/>
            <person name="Pitluck S."/>
            <person name="Chain P."/>
            <person name="Malfatti S."/>
            <person name="Shin M."/>
            <person name="Vergez L."/>
            <person name="Schmutz J."/>
            <person name="Larimer F."/>
            <person name="Land M."/>
            <person name="Hauser L."/>
            <person name="Kyrpides N."/>
            <person name="Mikhailova N."/>
            <person name="Stolz J.F."/>
            <person name="Dawson A."/>
            <person name="Fisher E."/>
            <person name="Crable B."/>
            <person name="Perera E."/>
            <person name="Lisak J."/>
            <person name="Ranganathan M."/>
            <person name="Basu P."/>
            <person name="Richardson P."/>
        </authorList>
    </citation>
    <scope>NUCLEOTIDE SEQUENCE [LARGE SCALE GENOMIC DNA]</scope>
    <source>
        <strain>OhILAs</strain>
    </source>
</reference>
<accession>A8MFK5</accession>
<keyword id="KW-0028">Amino-acid biosynthesis</keyword>
<keyword id="KW-0057">Aromatic amino acid biosynthesis</keyword>
<keyword id="KW-0067">ATP-binding</keyword>
<keyword id="KW-0963">Cytoplasm</keyword>
<keyword id="KW-0418">Kinase</keyword>
<keyword id="KW-0460">Magnesium</keyword>
<keyword id="KW-0479">Metal-binding</keyword>
<keyword id="KW-0547">Nucleotide-binding</keyword>
<keyword id="KW-1185">Reference proteome</keyword>
<keyword id="KW-0808">Transferase</keyword>
<sequence length="169" mass="19292">MVKNIVLVGFMAVGKTTLGKLLADQLDYNFIDLDLFIEKKESMSISEIFRLKGEAYFRQKESEALDLLSDVEQSVIATGGGTVISEENRSKLKQIGRVIYLEAEPSWILTNIKRSAVIRPLLVDERKSMDKIIEILENRRLYYEGTSEIKIPVSHRTLEEIIKDIVCNI</sequence>
<dbReference type="EC" id="2.7.1.71" evidence="1"/>
<dbReference type="EMBL" id="CP000853">
    <property type="protein sequence ID" value="ABW19168.1"/>
    <property type="molecule type" value="Genomic_DNA"/>
</dbReference>
<dbReference type="RefSeq" id="WP_012159480.1">
    <property type="nucleotide sequence ID" value="NC_009922.1"/>
</dbReference>
<dbReference type="SMR" id="A8MFK5"/>
<dbReference type="STRING" id="350688.Clos_1625"/>
<dbReference type="KEGG" id="aoe:Clos_1625"/>
<dbReference type="eggNOG" id="COG0703">
    <property type="taxonomic scope" value="Bacteria"/>
</dbReference>
<dbReference type="HOGENOM" id="CLU_057607_4_0_9"/>
<dbReference type="OrthoDB" id="9800332at2"/>
<dbReference type="UniPathway" id="UPA00053">
    <property type="reaction ID" value="UER00088"/>
</dbReference>
<dbReference type="Proteomes" id="UP000000269">
    <property type="component" value="Chromosome"/>
</dbReference>
<dbReference type="GO" id="GO:0005829">
    <property type="term" value="C:cytosol"/>
    <property type="evidence" value="ECO:0007669"/>
    <property type="project" value="TreeGrafter"/>
</dbReference>
<dbReference type="GO" id="GO:0005524">
    <property type="term" value="F:ATP binding"/>
    <property type="evidence" value="ECO:0007669"/>
    <property type="project" value="UniProtKB-UniRule"/>
</dbReference>
<dbReference type="GO" id="GO:0000287">
    <property type="term" value="F:magnesium ion binding"/>
    <property type="evidence" value="ECO:0007669"/>
    <property type="project" value="UniProtKB-UniRule"/>
</dbReference>
<dbReference type="GO" id="GO:0004765">
    <property type="term" value="F:shikimate kinase activity"/>
    <property type="evidence" value="ECO:0007669"/>
    <property type="project" value="UniProtKB-UniRule"/>
</dbReference>
<dbReference type="GO" id="GO:0008652">
    <property type="term" value="P:amino acid biosynthetic process"/>
    <property type="evidence" value="ECO:0007669"/>
    <property type="project" value="UniProtKB-KW"/>
</dbReference>
<dbReference type="GO" id="GO:0009073">
    <property type="term" value="P:aromatic amino acid family biosynthetic process"/>
    <property type="evidence" value="ECO:0007669"/>
    <property type="project" value="UniProtKB-KW"/>
</dbReference>
<dbReference type="GO" id="GO:0009423">
    <property type="term" value="P:chorismate biosynthetic process"/>
    <property type="evidence" value="ECO:0007669"/>
    <property type="project" value="UniProtKB-UniRule"/>
</dbReference>
<dbReference type="CDD" id="cd00464">
    <property type="entry name" value="SK"/>
    <property type="match status" value="1"/>
</dbReference>
<dbReference type="Gene3D" id="3.40.50.300">
    <property type="entry name" value="P-loop containing nucleotide triphosphate hydrolases"/>
    <property type="match status" value="1"/>
</dbReference>
<dbReference type="HAMAP" id="MF_00109">
    <property type="entry name" value="Shikimate_kinase"/>
    <property type="match status" value="1"/>
</dbReference>
<dbReference type="InterPro" id="IPR027417">
    <property type="entry name" value="P-loop_NTPase"/>
</dbReference>
<dbReference type="InterPro" id="IPR031322">
    <property type="entry name" value="Shikimate/glucono_kinase"/>
</dbReference>
<dbReference type="InterPro" id="IPR000623">
    <property type="entry name" value="Shikimate_kinase/TSH1"/>
</dbReference>
<dbReference type="InterPro" id="IPR023000">
    <property type="entry name" value="Shikimate_kinase_CS"/>
</dbReference>
<dbReference type="PANTHER" id="PTHR21087">
    <property type="entry name" value="SHIKIMATE KINASE"/>
    <property type="match status" value="1"/>
</dbReference>
<dbReference type="PANTHER" id="PTHR21087:SF16">
    <property type="entry name" value="SHIKIMATE KINASE 1, CHLOROPLASTIC"/>
    <property type="match status" value="1"/>
</dbReference>
<dbReference type="Pfam" id="PF01202">
    <property type="entry name" value="SKI"/>
    <property type="match status" value="1"/>
</dbReference>
<dbReference type="PRINTS" id="PR01100">
    <property type="entry name" value="SHIKIMTKNASE"/>
</dbReference>
<dbReference type="SUPFAM" id="SSF52540">
    <property type="entry name" value="P-loop containing nucleoside triphosphate hydrolases"/>
    <property type="match status" value="1"/>
</dbReference>
<dbReference type="PROSITE" id="PS01128">
    <property type="entry name" value="SHIKIMATE_KINASE"/>
    <property type="match status" value="1"/>
</dbReference>
<name>AROK_ALKOO</name>
<evidence type="ECO:0000255" key="1">
    <source>
        <dbReference type="HAMAP-Rule" id="MF_00109"/>
    </source>
</evidence>
<comment type="function">
    <text evidence="1">Catalyzes the specific phosphorylation of the 3-hydroxyl group of shikimic acid using ATP as a cosubstrate.</text>
</comment>
<comment type="catalytic activity">
    <reaction evidence="1">
        <text>shikimate + ATP = 3-phosphoshikimate + ADP + H(+)</text>
        <dbReference type="Rhea" id="RHEA:13121"/>
        <dbReference type="ChEBI" id="CHEBI:15378"/>
        <dbReference type="ChEBI" id="CHEBI:30616"/>
        <dbReference type="ChEBI" id="CHEBI:36208"/>
        <dbReference type="ChEBI" id="CHEBI:145989"/>
        <dbReference type="ChEBI" id="CHEBI:456216"/>
        <dbReference type="EC" id="2.7.1.71"/>
    </reaction>
</comment>
<comment type="cofactor">
    <cofactor evidence="1">
        <name>Mg(2+)</name>
        <dbReference type="ChEBI" id="CHEBI:18420"/>
    </cofactor>
    <text evidence="1">Binds 1 Mg(2+) ion per subunit.</text>
</comment>
<comment type="pathway">
    <text evidence="1">Metabolic intermediate biosynthesis; chorismate biosynthesis; chorismate from D-erythrose 4-phosphate and phosphoenolpyruvate: step 5/7.</text>
</comment>
<comment type="subunit">
    <text evidence="1">Monomer.</text>
</comment>
<comment type="subcellular location">
    <subcellularLocation>
        <location evidence="1">Cytoplasm</location>
    </subcellularLocation>
</comment>
<comment type="similarity">
    <text evidence="1">Belongs to the shikimate kinase family.</text>
</comment>
<protein>
    <recommendedName>
        <fullName evidence="1">Shikimate kinase</fullName>
        <shortName evidence="1">SK</shortName>
        <ecNumber evidence="1">2.7.1.71</ecNumber>
    </recommendedName>
</protein>
<organism>
    <name type="scientific">Alkaliphilus oremlandii (strain OhILAs)</name>
    <name type="common">Clostridium oremlandii (strain OhILAs)</name>
    <dbReference type="NCBI Taxonomy" id="350688"/>
    <lineage>
        <taxon>Bacteria</taxon>
        <taxon>Bacillati</taxon>
        <taxon>Bacillota</taxon>
        <taxon>Clostridia</taxon>
        <taxon>Peptostreptococcales</taxon>
        <taxon>Natronincolaceae</taxon>
        <taxon>Alkaliphilus</taxon>
    </lineage>
</organism>
<gene>
    <name evidence="1" type="primary">aroK</name>
    <name type="ordered locus">Clos_1625</name>
</gene>
<feature type="chain" id="PRO_1000094370" description="Shikimate kinase">
    <location>
        <begin position="1"/>
        <end position="169"/>
    </location>
</feature>
<feature type="binding site" evidence="1">
    <location>
        <begin position="12"/>
        <end position="17"/>
    </location>
    <ligand>
        <name>ATP</name>
        <dbReference type="ChEBI" id="CHEBI:30616"/>
    </ligand>
</feature>
<feature type="binding site" evidence="1">
    <location>
        <position position="16"/>
    </location>
    <ligand>
        <name>Mg(2+)</name>
        <dbReference type="ChEBI" id="CHEBI:18420"/>
    </ligand>
</feature>
<feature type="binding site" evidence="1">
    <location>
        <position position="34"/>
    </location>
    <ligand>
        <name>substrate</name>
    </ligand>
</feature>
<feature type="binding site" evidence="1">
    <location>
        <position position="58"/>
    </location>
    <ligand>
        <name>substrate</name>
    </ligand>
</feature>
<feature type="binding site" evidence="1">
    <location>
        <position position="80"/>
    </location>
    <ligand>
        <name>substrate</name>
    </ligand>
</feature>
<feature type="binding site" evidence="1">
    <location>
        <position position="119"/>
    </location>
    <ligand>
        <name>ATP</name>
        <dbReference type="ChEBI" id="CHEBI:30616"/>
    </ligand>
</feature>
<feature type="binding site" evidence="1">
    <location>
        <position position="139"/>
    </location>
    <ligand>
        <name>substrate</name>
    </ligand>
</feature>
<feature type="binding site" evidence="1">
    <location>
        <position position="156"/>
    </location>
    <ligand>
        <name>ATP</name>
        <dbReference type="ChEBI" id="CHEBI:30616"/>
    </ligand>
</feature>
<proteinExistence type="inferred from homology"/>